<feature type="chain" id="PRO_1000069908" description="Chromosome partition protein MukB">
    <location>
        <begin position="1"/>
        <end position="1510"/>
    </location>
</feature>
<feature type="region of interest" description="Flexible hinge" evidence="1">
    <location>
        <begin position="707"/>
        <end position="824"/>
    </location>
</feature>
<feature type="coiled-coil region" evidence="1">
    <location>
        <begin position="6"/>
        <end position="30"/>
    </location>
</feature>
<feature type="coiled-coil region" evidence="1">
    <location>
        <begin position="346"/>
        <end position="506"/>
    </location>
</feature>
<feature type="coiled-coil region" evidence="1">
    <location>
        <begin position="553"/>
        <end position="633"/>
    </location>
</feature>
<feature type="coiled-coil region" evidence="1">
    <location>
        <begin position="673"/>
        <end position="706"/>
    </location>
</feature>
<feature type="coiled-coil region" evidence="1">
    <location>
        <begin position="821"/>
        <end position="847"/>
    </location>
</feature>
<feature type="coiled-coil region" evidence="1">
    <location>
        <begin position="876"/>
        <end position="1064"/>
    </location>
</feature>
<feature type="coiled-coil region" evidence="1">
    <location>
        <begin position="1094"/>
        <end position="1149"/>
    </location>
</feature>
<feature type="coiled-coil region" evidence="1">
    <location>
        <begin position="1249"/>
        <end position="1305"/>
    </location>
</feature>
<feature type="binding site" evidence="1">
    <location>
        <begin position="75"/>
        <end position="82"/>
    </location>
    <ligand>
        <name>ATP</name>
        <dbReference type="ChEBI" id="CHEBI:30616"/>
    </ligand>
</feature>
<comment type="function">
    <text evidence="1">Plays a central role in chromosome condensation, segregation and cell cycle progression. Functions as a homodimer, which is essential for chromosome partition. Involved in negative DNA supercoiling in vivo, and by this means organize and compact chromosomes. May achieve or facilitate chromosome segregation by condensation DNA from both sides of a centrally located replisome during cell division.</text>
</comment>
<comment type="subunit">
    <text evidence="1">Homodimerization via its hinge domain. Binds to DNA via its C-terminal region. Interacts, and probably forms a ternary complex, with MukE and MukF via its C-terminal region. The complex formation is stimulated by calcium or magnesium. Interacts with tubulin-related protein FtsZ.</text>
</comment>
<comment type="subcellular location">
    <subcellularLocation>
        <location evidence="1">Cytoplasm</location>
        <location evidence="1">Nucleoid</location>
    </subcellularLocation>
    <text evidence="1">Restricted to the nucleoid region.</text>
</comment>
<comment type="domain">
    <text evidence="1">The hinge domain, which separates the large intramolecular coiled coil regions, allows the homodimerization, forming a V-shaped homodimer.</text>
</comment>
<comment type="similarity">
    <text evidence="1">Belongs to the SMC family. MukB subfamily.</text>
</comment>
<proteinExistence type="inferred from homology"/>
<organism>
    <name type="scientific">Haemophilus influenzae (strain 86-028NP)</name>
    <dbReference type="NCBI Taxonomy" id="281310"/>
    <lineage>
        <taxon>Bacteria</taxon>
        <taxon>Pseudomonadati</taxon>
        <taxon>Pseudomonadota</taxon>
        <taxon>Gammaproteobacteria</taxon>
        <taxon>Pasteurellales</taxon>
        <taxon>Pasteurellaceae</taxon>
        <taxon>Haemophilus</taxon>
    </lineage>
</organism>
<keyword id="KW-0067">ATP-binding</keyword>
<keyword id="KW-0131">Cell cycle</keyword>
<keyword id="KW-0132">Cell division</keyword>
<keyword id="KW-0159">Chromosome partition</keyword>
<keyword id="KW-0175">Coiled coil</keyword>
<keyword id="KW-0963">Cytoplasm</keyword>
<keyword id="KW-0226">DNA condensation</keyword>
<keyword id="KW-0238">DNA-binding</keyword>
<keyword id="KW-0547">Nucleotide-binding</keyword>
<reference key="1">
    <citation type="journal article" date="2005" name="J. Bacteriol.">
        <title>Genomic sequence of an otitis media isolate of nontypeable Haemophilus influenzae: comparative study with H. influenzae serotype d, strain KW20.</title>
        <authorList>
            <person name="Harrison A."/>
            <person name="Dyer D.W."/>
            <person name="Gillaspy A."/>
            <person name="Ray W.C."/>
            <person name="Mungur R."/>
            <person name="Carson M.B."/>
            <person name="Zhong H."/>
            <person name="Gipson J."/>
            <person name="Gipson M."/>
            <person name="Johnson L.S."/>
            <person name="Lewis L."/>
            <person name="Bakaletz L.O."/>
            <person name="Munson R.S. Jr."/>
        </authorList>
    </citation>
    <scope>NUCLEOTIDE SEQUENCE [LARGE SCALE GENOMIC DNA]</scope>
    <source>
        <strain>86-028NP</strain>
    </source>
</reference>
<name>MUKB_HAEI8</name>
<protein>
    <recommendedName>
        <fullName evidence="1">Chromosome partition protein MukB</fullName>
    </recommendedName>
    <alternativeName>
        <fullName evidence="1">Structural maintenance of chromosome-related protein</fullName>
    </alternativeName>
</protein>
<gene>
    <name evidence="1" type="primary">mukB</name>
    <name type="ordered locus">NTHI1784</name>
</gene>
<sequence>MSDVFELENEIELESDEVIMENENVEEIVDAPMPFSMTTNNGVERGKFRSLTLINWNGFFARTFDLDELVTTLSGGNGAGKSTTMAGFVTALIPDLTLLHFRNTTEAGSTGGSRDKGLHGKLRPGVCYAVLDTINSRHQRILVGVRLQQIAGRDKKVDLKTFSIQGVELSQNPTALFTETVGERQARVLNLNELKDKIENIGAQFKQYHSITDYHGMMFDLGIIPKRLRSASDRSKFYKLIEASLYGGISSAITRSLRDYLLPENLGVRKAFQDMESALRENRMTLEAIKVTQSDRNLFKHLITETTNYVASDYMRNANERRGNIEAALESRREWYKAKAEQNLSQHRLVDLSREAAELAENERTLEVDHQSAVDHLNLVLNALRHQEKITRYQEDIAELTERLEEQKIVVEDANDALEESQAQFEQTEIEIDAVRAQLADYQQALDAQQTRALQYQQAITALEKAKTLCGLADLSVKNVEDYHAEFEAHAESLTETVLELEHKMSISEAAKSQFDKAYQLVCKIAGEIPRSSAWESAKELLREYPSQKLQAQQTPQLRTKLHELEQRYAQQQSAVKLLNDFNQRANLSLQTAEELEDYHAEQEALIEDISARLSEQVENRSTLRQKRENLTALYDENARKAPAWLTAQAALERLEQQSGETFEHSQDVMNFMQSQLVKERELTMQRDQLEQKRLQLDEQISRLSQPDGSEDPRLNMLAERFGGVLLSELYDDVTIEDAPYFSALYGPARHAIVVRDLNAVREQLAQLEDCPDDLYLIEGDPTAFDDSVLSAQELELGVVVQVSDRELRYSRFPEIPLFGRAAREKRLEELQIERDEVAEQYAQIAFDVQKCQRLHEHFSQFVGLHLALAFQPNPEELMSEINRERNEIDRELNQFNNGEQQLRIQLDNAKEKLQLLNKLIPQLNVLTDEDLIDRIEECREQLDIAEQDEYFIRQYGVTLSQLEPIANSLQSDPENYDGLKNELTQAIERQKQVQQRVFALADVVQRKHHFGYEDAGQAKTSELNEKLRQRLEQMQAQRDMQREQVRQKQSQFAEYNRVLIQLQSSYDSKYQLLNELISEISDLGVRADDGAEERARIRRDELHQQLSTSRQRRSYVEKQLTLIESEADNLNRLIRKTERDYKTQRELVVAAKVSWCVVLRLSRNSDMEKRLNRRELAYLSADELRSMSDKALGALRTAVADNEYLRDSLRVSEDSRKPENKVRFFIAVYQHLRERIRQDIIKTDDPIDAIEQMEIELSRLTAELTGREKKLAISSESVANIMRKTIQREQNRIRMLNQGLQNISFGQVKSVRLVVNIRDTHAMLLDALSGQQDEYQDLFNDNCITFSEAMAKLYQRINPHIDMGQRTAQTIGEELLDYRNYLELEVEVFRGADGWLRAESGALSTGEAIGTGMSILLMVVQSWEEESRRIRGKDIVPCRLLFLDEAARLDGKSISTLFELCERLDMQLLIAAPENISPEKGTTYKLVRKIAGNQEHVHVVGLRGFGATE</sequence>
<dbReference type="EMBL" id="CP000057">
    <property type="protein sequence ID" value="AAX88561.1"/>
    <property type="molecule type" value="Genomic_DNA"/>
</dbReference>
<dbReference type="RefSeq" id="WP_011272629.1">
    <property type="nucleotide sequence ID" value="NC_007146.2"/>
</dbReference>
<dbReference type="SMR" id="Q4QK86"/>
<dbReference type="KEGG" id="hit:NTHI1784"/>
<dbReference type="HOGENOM" id="CLU_004430_0_0_6"/>
<dbReference type="Proteomes" id="UP000002525">
    <property type="component" value="Chromosome"/>
</dbReference>
<dbReference type="GO" id="GO:0005737">
    <property type="term" value="C:cytoplasm"/>
    <property type="evidence" value="ECO:0007669"/>
    <property type="project" value="UniProtKB-UniRule"/>
</dbReference>
<dbReference type="GO" id="GO:0009295">
    <property type="term" value="C:nucleoid"/>
    <property type="evidence" value="ECO:0007669"/>
    <property type="project" value="UniProtKB-SubCell"/>
</dbReference>
<dbReference type="GO" id="GO:0005524">
    <property type="term" value="F:ATP binding"/>
    <property type="evidence" value="ECO:0007669"/>
    <property type="project" value="UniProtKB-UniRule"/>
</dbReference>
<dbReference type="GO" id="GO:0003677">
    <property type="term" value="F:DNA binding"/>
    <property type="evidence" value="ECO:0007669"/>
    <property type="project" value="UniProtKB-UniRule"/>
</dbReference>
<dbReference type="GO" id="GO:0051301">
    <property type="term" value="P:cell division"/>
    <property type="evidence" value="ECO:0007669"/>
    <property type="project" value="UniProtKB-KW"/>
</dbReference>
<dbReference type="GO" id="GO:0030261">
    <property type="term" value="P:chromosome condensation"/>
    <property type="evidence" value="ECO:0007669"/>
    <property type="project" value="UniProtKB-KW"/>
</dbReference>
<dbReference type="GO" id="GO:0007059">
    <property type="term" value="P:chromosome segregation"/>
    <property type="evidence" value="ECO:0007669"/>
    <property type="project" value="UniProtKB-UniRule"/>
</dbReference>
<dbReference type="GO" id="GO:0006260">
    <property type="term" value="P:DNA replication"/>
    <property type="evidence" value="ECO:0007669"/>
    <property type="project" value="UniProtKB-UniRule"/>
</dbReference>
<dbReference type="Gene3D" id="1.20.58.850">
    <property type="match status" value="1"/>
</dbReference>
<dbReference type="Gene3D" id="3.40.1140.10">
    <property type="match status" value="2"/>
</dbReference>
<dbReference type="Gene3D" id="1.20.5.420">
    <property type="entry name" value="Immunoglobulin FC, subunit C"/>
    <property type="match status" value="1"/>
</dbReference>
<dbReference type="Gene3D" id="3.30.70.3500">
    <property type="entry name" value="MukB, hinge domain"/>
    <property type="match status" value="1"/>
</dbReference>
<dbReference type="HAMAP" id="MF_01800">
    <property type="entry name" value="MukB"/>
    <property type="match status" value="1"/>
</dbReference>
<dbReference type="InterPro" id="IPR012090">
    <property type="entry name" value="MukB"/>
</dbReference>
<dbReference type="InterPro" id="IPR050308">
    <property type="entry name" value="MukB/SMC"/>
</dbReference>
<dbReference type="InterPro" id="IPR032520">
    <property type="entry name" value="MukB_hinge"/>
</dbReference>
<dbReference type="InterPro" id="IPR042501">
    <property type="entry name" value="MukB_hinge_sf"/>
</dbReference>
<dbReference type="InterPro" id="IPR007406">
    <property type="entry name" value="MukB_N_dom"/>
</dbReference>
<dbReference type="InterPro" id="IPR027417">
    <property type="entry name" value="P-loop_NTPase"/>
</dbReference>
<dbReference type="NCBIfam" id="NF003422">
    <property type="entry name" value="PRK04863.1"/>
    <property type="match status" value="1"/>
</dbReference>
<dbReference type="PANTHER" id="PTHR42963">
    <property type="entry name" value="CHROMOSOME PARTITION PROTEIN MUKB"/>
    <property type="match status" value="1"/>
</dbReference>
<dbReference type="PANTHER" id="PTHR42963:SF1">
    <property type="entry name" value="DUF4476 DOMAIN-CONTAINING PROTEIN"/>
    <property type="match status" value="1"/>
</dbReference>
<dbReference type="Pfam" id="PF04310">
    <property type="entry name" value="MukB"/>
    <property type="match status" value="1"/>
</dbReference>
<dbReference type="Pfam" id="PF16330">
    <property type="entry name" value="MukB_hinge"/>
    <property type="match status" value="1"/>
</dbReference>
<dbReference type="Pfam" id="PF13558">
    <property type="entry name" value="SbcC_Walker_B"/>
    <property type="match status" value="1"/>
</dbReference>
<dbReference type="PIRSF" id="PIRSF005246">
    <property type="entry name" value="MukB"/>
    <property type="match status" value="1"/>
</dbReference>
<dbReference type="SUPFAM" id="SSF52540">
    <property type="entry name" value="P-loop containing nucleoside triphosphate hydrolases"/>
    <property type="match status" value="2"/>
</dbReference>
<accession>Q4QK86</accession>
<evidence type="ECO:0000255" key="1">
    <source>
        <dbReference type="HAMAP-Rule" id="MF_01800"/>
    </source>
</evidence>